<name>GLMM_DESDA</name>
<feature type="chain" id="PRO_1000185364" description="Phosphoglucosamine mutase">
    <location>
        <begin position="1"/>
        <end position="450"/>
    </location>
</feature>
<feature type="active site" description="Phosphoserine intermediate" evidence="1">
    <location>
        <position position="102"/>
    </location>
</feature>
<feature type="binding site" description="via phosphate group" evidence="1">
    <location>
        <position position="102"/>
    </location>
    <ligand>
        <name>Mg(2+)</name>
        <dbReference type="ChEBI" id="CHEBI:18420"/>
    </ligand>
</feature>
<feature type="binding site" evidence="1">
    <location>
        <position position="244"/>
    </location>
    <ligand>
        <name>Mg(2+)</name>
        <dbReference type="ChEBI" id="CHEBI:18420"/>
    </ligand>
</feature>
<feature type="binding site" evidence="1">
    <location>
        <position position="246"/>
    </location>
    <ligand>
        <name>Mg(2+)</name>
        <dbReference type="ChEBI" id="CHEBI:18420"/>
    </ligand>
</feature>
<feature type="binding site" evidence="1">
    <location>
        <position position="248"/>
    </location>
    <ligand>
        <name>Mg(2+)</name>
        <dbReference type="ChEBI" id="CHEBI:18420"/>
    </ligand>
</feature>
<feature type="modified residue" description="Phosphoserine" evidence="1">
    <location>
        <position position="102"/>
    </location>
</feature>
<organism>
    <name type="scientific">Desulfovibrio desulfuricans (strain ATCC 27774 / DSM 6949 / MB)</name>
    <dbReference type="NCBI Taxonomy" id="525146"/>
    <lineage>
        <taxon>Bacteria</taxon>
        <taxon>Pseudomonadati</taxon>
        <taxon>Thermodesulfobacteriota</taxon>
        <taxon>Desulfovibrionia</taxon>
        <taxon>Desulfovibrionales</taxon>
        <taxon>Desulfovibrionaceae</taxon>
        <taxon>Desulfovibrio</taxon>
    </lineage>
</organism>
<comment type="function">
    <text evidence="1">Catalyzes the conversion of glucosamine-6-phosphate to glucosamine-1-phosphate.</text>
</comment>
<comment type="catalytic activity">
    <reaction evidence="1">
        <text>alpha-D-glucosamine 1-phosphate = D-glucosamine 6-phosphate</text>
        <dbReference type="Rhea" id="RHEA:23424"/>
        <dbReference type="ChEBI" id="CHEBI:58516"/>
        <dbReference type="ChEBI" id="CHEBI:58725"/>
        <dbReference type="EC" id="5.4.2.10"/>
    </reaction>
</comment>
<comment type="cofactor">
    <cofactor evidence="1">
        <name>Mg(2+)</name>
        <dbReference type="ChEBI" id="CHEBI:18420"/>
    </cofactor>
    <text evidence="1">Binds 1 Mg(2+) ion per subunit.</text>
</comment>
<comment type="PTM">
    <text evidence="1">Activated by phosphorylation.</text>
</comment>
<comment type="similarity">
    <text evidence="1">Belongs to the phosphohexose mutase family.</text>
</comment>
<gene>
    <name evidence="1" type="primary">glmM</name>
    <name type="ordered locus">Ddes_1713</name>
</gene>
<protein>
    <recommendedName>
        <fullName evidence="1">Phosphoglucosamine mutase</fullName>
        <ecNumber evidence="1">5.4.2.10</ecNumber>
    </recommendedName>
</protein>
<dbReference type="EC" id="5.4.2.10" evidence="1"/>
<dbReference type="EMBL" id="CP001358">
    <property type="protein sequence ID" value="ACL49611.1"/>
    <property type="molecule type" value="Genomic_DNA"/>
</dbReference>
<dbReference type="SMR" id="B8J1K3"/>
<dbReference type="STRING" id="525146.Ddes_1713"/>
<dbReference type="KEGG" id="dds:Ddes_1713"/>
<dbReference type="eggNOG" id="COG1109">
    <property type="taxonomic scope" value="Bacteria"/>
</dbReference>
<dbReference type="HOGENOM" id="CLU_016950_7_0_7"/>
<dbReference type="GO" id="GO:0005829">
    <property type="term" value="C:cytosol"/>
    <property type="evidence" value="ECO:0007669"/>
    <property type="project" value="TreeGrafter"/>
</dbReference>
<dbReference type="GO" id="GO:0000287">
    <property type="term" value="F:magnesium ion binding"/>
    <property type="evidence" value="ECO:0007669"/>
    <property type="project" value="UniProtKB-UniRule"/>
</dbReference>
<dbReference type="GO" id="GO:0008966">
    <property type="term" value="F:phosphoglucosamine mutase activity"/>
    <property type="evidence" value="ECO:0007669"/>
    <property type="project" value="UniProtKB-UniRule"/>
</dbReference>
<dbReference type="GO" id="GO:0004615">
    <property type="term" value="F:phosphomannomutase activity"/>
    <property type="evidence" value="ECO:0007669"/>
    <property type="project" value="TreeGrafter"/>
</dbReference>
<dbReference type="GO" id="GO:0005975">
    <property type="term" value="P:carbohydrate metabolic process"/>
    <property type="evidence" value="ECO:0007669"/>
    <property type="project" value="InterPro"/>
</dbReference>
<dbReference type="GO" id="GO:0009252">
    <property type="term" value="P:peptidoglycan biosynthetic process"/>
    <property type="evidence" value="ECO:0007669"/>
    <property type="project" value="TreeGrafter"/>
</dbReference>
<dbReference type="GO" id="GO:0006048">
    <property type="term" value="P:UDP-N-acetylglucosamine biosynthetic process"/>
    <property type="evidence" value="ECO:0007669"/>
    <property type="project" value="TreeGrafter"/>
</dbReference>
<dbReference type="CDD" id="cd05802">
    <property type="entry name" value="GlmM"/>
    <property type="match status" value="1"/>
</dbReference>
<dbReference type="FunFam" id="3.30.310.50:FF:000001">
    <property type="entry name" value="Phosphoglucosamine mutase"/>
    <property type="match status" value="1"/>
</dbReference>
<dbReference type="FunFam" id="3.40.120.10:FF:000001">
    <property type="entry name" value="Phosphoglucosamine mutase"/>
    <property type="match status" value="1"/>
</dbReference>
<dbReference type="FunFam" id="3.40.120.10:FF:000002">
    <property type="entry name" value="Phosphoglucosamine mutase"/>
    <property type="match status" value="1"/>
</dbReference>
<dbReference type="Gene3D" id="3.40.120.10">
    <property type="entry name" value="Alpha-D-Glucose-1,6-Bisphosphate, subunit A, domain 3"/>
    <property type="match status" value="3"/>
</dbReference>
<dbReference type="Gene3D" id="3.30.310.50">
    <property type="entry name" value="Alpha-D-phosphohexomutase, C-terminal domain"/>
    <property type="match status" value="1"/>
</dbReference>
<dbReference type="HAMAP" id="MF_01554_B">
    <property type="entry name" value="GlmM_B"/>
    <property type="match status" value="1"/>
</dbReference>
<dbReference type="InterPro" id="IPR005844">
    <property type="entry name" value="A-D-PHexomutase_a/b/a-I"/>
</dbReference>
<dbReference type="InterPro" id="IPR016055">
    <property type="entry name" value="A-D-PHexomutase_a/b/a-I/II/III"/>
</dbReference>
<dbReference type="InterPro" id="IPR005845">
    <property type="entry name" value="A-D-PHexomutase_a/b/a-II"/>
</dbReference>
<dbReference type="InterPro" id="IPR005846">
    <property type="entry name" value="A-D-PHexomutase_a/b/a-III"/>
</dbReference>
<dbReference type="InterPro" id="IPR005843">
    <property type="entry name" value="A-D-PHexomutase_C"/>
</dbReference>
<dbReference type="InterPro" id="IPR036900">
    <property type="entry name" value="A-D-PHexomutase_C_sf"/>
</dbReference>
<dbReference type="InterPro" id="IPR016066">
    <property type="entry name" value="A-D-PHexomutase_CS"/>
</dbReference>
<dbReference type="InterPro" id="IPR005841">
    <property type="entry name" value="Alpha-D-phosphohexomutase_SF"/>
</dbReference>
<dbReference type="InterPro" id="IPR006352">
    <property type="entry name" value="GlmM_bact"/>
</dbReference>
<dbReference type="InterPro" id="IPR050060">
    <property type="entry name" value="Phosphoglucosamine_mutase"/>
</dbReference>
<dbReference type="NCBIfam" id="TIGR01455">
    <property type="entry name" value="glmM"/>
    <property type="match status" value="1"/>
</dbReference>
<dbReference type="NCBIfam" id="NF008139">
    <property type="entry name" value="PRK10887.1"/>
    <property type="match status" value="1"/>
</dbReference>
<dbReference type="PANTHER" id="PTHR42946:SF1">
    <property type="entry name" value="PHOSPHOGLUCOMUTASE (ALPHA-D-GLUCOSE-1,6-BISPHOSPHATE-DEPENDENT)"/>
    <property type="match status" value="1"/>
</dbReference>
<dbReference type="PANTHER" id="PTHR42946">
    <property type="entry name" value="PHOSPHOHEXOSE MUTASE"/>
    <property type="match status" value="1"/>
</dbReference>
<dbReference type="Pfam" id="PF02878">
    <property type="entry name" value="PGM_PMM_I"/>
    <property type="match status" value="1"/>
</dbReference>
<dbReference type="Pfam" id="PF02879">
    <property type="entry name" value="PGM_PMM_II"/>
    <property type="match status" value="1"/>
</dbReference>
<dbReference type="Pfam" id="PF02880">
    <property type="entry name" value="PGM_PMM_III"/>
    <property type="match status" value="1"/>
</dbReference>
<dbReference type="Pfam" id="PF00408">
    <property type="entry name" value="PGM_PMM_IV"/>
    <property type="match status" value="1"/>
</dbReference>
<dbReference type="PRINTS" id="PR00509">
    <property type="entry name" value="PGMPMM"/>
</dbReference>
<dbReference type="SUPFAM" id="SSF55957">
    <property type="entry name" value="Phosphoglucomutase, C-terminal domain"/>
    <property type="match status" value="1"/>
</dbReference>
<dbReference type="SUPFAM" id="SSF53738">
    <property type="entry name" value="Phosphoglucomutase, first 3 domains"/>
    <property type="match status" value="3"/>
</dbReference>
<dbReference type="PROSITE" id="PS00710">
    <property type="entry name" value="PGM_PMM"/>
    <property type="match status" value="1"/>
</dbReference>
<reference key="1">
    <citation type="submission" date="2009-01" db="EMBL/GenBank/DDBJ databases">
        <title>Complete sequence of Desulfovibrio desulfuricans subsp. desulfuricans str. ATCC 27774.</title>
        <authorList>
            <consortium name="US DOE Joint Genome Institute"/>
            <person name="Lucas S."/>
            <person name="Copeland A."/>
            <person name="Lapidus A."/>
            <person name="Glavina del Rio T."/>
            <person name="Tice H."/>
            <person name="Bruce D."/>
            <person name="Goodwin L."/>
            <person name="Pitluck S."/>
            <person name="Sims D."/>
            <person name="Lu M."/>
            <person name="Kiss H."/>
            <person name="Meineke L."/>
            <person name="Brettin T."/>
            <person name="Detter J.C."/>
            <person name="Han C."/>
            <person name="Larimer F."/>
            <person name="Land M."/>
            <person name="Hauser L."/>
            <person name="Kyrpides N."/>
            <person name="Ovchinnikova G."/>
            <person name="Hazen T.C."/>
        </authorList>
    </citation>
    <scope>NUCLEOTIDE SEQUENCE [LARGE SCALE GENOMIC DNA]</scope>
    <source>
        <strain>ATCC 27774 / DSM 6949 / MB</strain>
    </source>
</reference>
<sequence length="450" mass="49046">MADRLFGTDGLRGTVNTYPMTVDVALRLGLAAGIRFRRGQHQHKVVIGKDTRLSGYMFESALTAGLCAAGMHVIMTGPLPTPAISFLTRSMRADLGVVISASHNPFQDNGIKFFDADGYKLPDMAEDEIAAMVLDAGFSWPYPDSRGVGRATKIEDAGGRYIVYTKNCFPAHLTLSGLRIVVDCANGASYKVAPLALEELGAEVFRIGTGPDGTNINEHCGSLHPDVVAAKVREVRADIGLALDGDADRLIVVDERGVVLDGDQIMALCAQAMMARGELPGNLLVATAMSNMALELFMRDHGGQLLRTKVGDRYVMEAMRREGAMLGGEQSGHLIFHRYSTTGDGLLAALQILRIMREKERPLSELAGLLTPFPQKLINVRVEKRLPFEERPAIGEAVAQVEKELGGRGRVLLRYSGTEALCRVMVEGEHEDRVRTYAEDLAQVVERELR</sequence>
<keyword id="KW-0413">Isomerase</keyword>
<keyword id="KW-0460">Magnesium</keyword>
<keyword id="KW-0479">Metal-binding</keyword>
<keyword id="KW-0597">Phosphoprotein</keyword>
<proteinExistence type="inferred from homology"/>
<evidence type="ECO:0000255" key="1">
    <source>
        <dbReference type="HAMAP-Rule" id="MF_01554"/>
    </source>
</evidence>
<accession>B8J1K3</accession>